<organism>
    <name type="scientific">Aspergillus ustus</name>
    <dbReference type="NCBI Taxonomy" id="40382"/>
    <lineage>
        <taxon>Eukaryota</taxon>
        <taxon>Fungi</taxon>
        <taxon>Dikarya</taxon>
        <taxon>Ascomycota</taxon>
        <taxon>Pezizomycotina</taxon>
        <taxon>Eurotiomycetes</taxon>
        <taxon>Eurotiomycetidae</taxon>
        <taxon>Eurotiales</taxon>
        <taxon>Aspergillaceae</taxon>
        <taxon>Aspergillus</taxon>
        <taxon>Aspergillus subgen. Nidulantes</taxon>
    </lineage>
</organism>
<proteinExistence type="evidence at protein level"/>
<accession>A0A0C1E2S7</accession>
<comment type="function">
    <text evidence="2">O-acetyltransferase; part of the gene cluster that mediates the biosynthesis of protubonine B, a hydroxylated and diacetylated cyclo-L-Trp-L-Leu derivative (PubMed:37382166). Within the pathway, pboB catalyzes the acetylation of protubonine C at N-1 of the indoline ring to produce protubonine B (PubMed:37382166). The first step of the protubonine B synthesis is performed by the nonribosomal peptide synthetase pboA that catalyzes the formation of cyclo-L-Trp-L-Leu by condensing L-Leu with L-Trp. The flavin-dependent monooxygenase pboD is responsible for hydroxylation at C-3 of the indole ring and subsequent formation of the pyrrolidine ring, leadind to protubonine D. Protubonine D is further diacetylated by two acetyltransferases, pboB and pboC, to form the final product protubonine B via protubonine C (PubMed:37382166).</text>
</comment>
<comment type="pathway">
    <text evidence="2">Secondary metabolite biosynthesis.</text>
</comment>
<comment type="subunit">
    <text evidence="1">Monomer.</text>
</comment>
<comment type="disruption phenotype">
    <text evidence="2">Blocks the production of protubonine B and leads to the accumulation of protubonine C and protubonine D.</text>
</comment>
<comment type="similarity">
    <text evidence="4">Belongs to the fumigaclavine B O-acetyltransferase family.</text>
</comment>
<gene>
    <name evidence="3" type="primary">pboB</name>
    <name type="ORF">HK57_00374</name>
</gene>
<evidence type="ECO:0000250" key="1">
    <source>
        <dbReference type="UniProtKB" id="Q4WZ64"/>
    </source>
</evidence>
<evidence type="ECO:0000269" key="2">
    <source>
    </source>
</evidence>
<evidence type="ECO:0000303" key="3">
    <source>
    </source>
</evidence>
<evidence type="ECO:0000305" key="4"/>
<dbReference type="EC" id="2.3.1.-" evidence="2"/>
<dbReference type="EMBL" id="JOMC01000033">
    <property type="protein sequence ID" value="KIA75847.1"/>
    <property type="molecule type" value="Genomic_DNA"/>
</dbReference>
<dbReference type="SMR" id="A0A0C1E2S7"/>
<dbReference type="Proteomes" id="UP000053475">
    <property type="component" value="Unassembled WGS sequence"/>
</dbReference>
<dbReference type="GO" id="GO:0016746">
    <property type="term" value="F:acyltransferase activity"/>
    <property type="evidence" value="ECO:0007669"/>
    <property type="project" value="UniProtKB-KW"/>
</dbReference>
<dbReference type="Gene3D" id="3.30.559.10">
    <property type="entry name" value="Chloramphenicol acetyltransferase-like domain"/>
    <property type="match status" value="2"/>
</dbReference>
<dbReference type="InterPro" id="IPR023213">
    <property type="entry name" value="CAT-like_dom_sf"/>
</dbReference>
<dbReference type="InterPro" id="IPR051283">
    <property type="entry name" value="Sec_Metabolite_Acyltrans"/>
</dbReference>
<dbReference type="PANTHER" id="PTHR31896">
    <property type="entry name" value="FAMILY REGULATORY PROTEIN, PUTATIVE (AFU_ORTHOLOGUE AFUA_3G14730)-RELATED"/>
    <property type="match status" value="1"/>
</dbReference>
<dbReference type="PANTHER" id="PTHR31896:SF64">
    <property type="entry name" value="TRICHOTHECENE 3-O-ACETYLTRANSFERASE"/>
    <property type="match status" value="1"/>
</dbReference>
<dbReference type="Pfam" id="PF02458">
    <property type="entry name" value="Transferase"/>
    <property type="match status" value="1"/>
</dbReference>
<name>PBOB_ASPUT</name>
<reference key="1">
    <citation type="journal article" date="2015" name="PLoS ONE">
        <title>A genomics based discovery of secondary metabolite biosynthetic gene clusters in Aspergillus ustus.</title>
        <authorList>
            <person name="Pi B."/>
            <person name="Yu D."/>
            <person name="Dai F."/>
            <person name="Song X."/>
            <person name="Zhu C."/>
            <person name="Li H."/>
            <person name="Yu Y."/>
        </authorList>
    </citation>
    <scope>NUCLEOTIDE SEQUENCE [LARGE SCALE GENOMIC DNA]</scope>
    <source>
        <strain>3.3904</strain>
    </source>
</reference>
<reference key="2">
    <citation type="journal article" date="2023" name="J. Nat. Prod.">
        <title>A flavin-dependent oxygenase catalyzes hydroxylation and simultaneous pyrrolidine ring formation in protubonine biosynthesis in Aspergillus ustus.</title>
        <authorList>
            <person name="Janzen D.J."/>
            <person name="Wang H."/>
            <person name="Li S.M."/>
        </authorList>
    </citation>
    <scope>FUNCTION</scope>
    <scope>DISRUPTION PHENOTYPE</scope>
    <scope>CATALYTIC ACTIVITY</scope>
    <scope>PATHWAY</scope>
</reference>
<keyword id="KW-0012">Acyltransferase</keyword>
<keyword id="KW-1185">Reference proteome</keyword>
<keyword id="KW-0808">Transferase</keyword>
<feature type="chain" id="PRO_0000458982" description="O-acetyltransferase pboB">
    <location>
        <begin position="1"/>
        <end position="483"/>
    </location>
</feature>
<sequence>MVRTDDQPYVPTPIDRLFSHSYVRTQLAFQLDDVSGCATLLRRGMERLIRTSPFLSRELTIHMNDDQTESITTKPISPQELDRMLKIKHHEKPLRQALIEASNDRDCLDDKFMPTSFHRLDVSQPCPVMVVQANIHPDGVLLAVATNHMVMDATGQGIAVQCLADCCRLEQGDVVSLPTCSADQDRGRELLLHELPARIVNREFSEYRPCRDLYSQSAALADLAHKAATTIRVAHFTIAAEHVHALKTRCNEMLSQVFESNGHVFGADDAPWISSSDVVIALIWRSINCARYQALTTTQQPPEKQAKKDSGEVVHVGIPVNVRSRVSPVLPGSYMGNGAILVLVPQPLRTFSGTDWMSTICRVGLAVRTRLAAITSDEIRSLLHYILNAPDPIAFSFDVADYFVSNWRQMGFYEADFGSKMGKPQRIRNPDGVVGGTVFIMPKRSQPENAPWELQVSLTDEMLRLLDQDDVWATYVRPDTYWP</sequence>
<protein>
    <recommendedName>
        <fullName evidence="3">O-acetyltransferase pboB</fullName>
        <ecNumber evidence="2">2.3.1.-</ecNumber>
    </recommendedName>
    <alternativeName>
        <fullName evidence="3">Protubonine biosynthesis cluster protein B</fullName>
    </alternativeName>
</protein>